<gene>
    <name evidence="4" type="primary">impt-1</name>
    <name evidence="4" type="ORF">Y52B11A.2</name>
</gene>
<dbReference type="EMBL" id="AL032654">
    <property type="protein sequence ID" value="CAA21718.1"/>
    <property type="molecule type" value="Genomic_DNA"/>
</dbReference>
<dbReference type="EMBL" id="AL032654">
    <property type="protein sequence ID" value="CAE54915.1"/>
    <property type="molecule type" value="Genomic_DNA"/>
</dbReference>
<dbReference type="PIR" id="T27104">
    <property type="entry name" value="T27104"/>
</dbReference>
<dbReference type="RefSeq" id="NP_001021782.1">
    <molecule id="Q9XWF4-1"/>
    <property type="nucleotide sequence ID" value="NM_001026611.4"/>
</dbReference>
<dbReference type="RefSeq" id="NP_001021783.1">
    <property type="nucleotide sequence ID" value="NM_001026612.2"/>
</dbReference>
<dbReference type="RefSeq" id="NP_001379419.1">
    <molecule id="Q9XWF4-2"/>
    <property type="nucleotide sequence ID" value="NM_001392943.1"/>
</dbReference>
<dbReference type="SMR" id="Q9XWF4"/>
<dbReference type="BioGRID" id="38410">
    <property type="interactions" value="7"/>
</dbReference>
<dbReference type="FunCoup" id="Q9XWF4">
    <property type="interactions" value="2673"/>
</dbReference>
<dbReference type="STRING" id="6239.Y52B11A.2a.1"/>
<dbReference type="PaxDb" id="6239-Y52B11A.2a"/>
<dbReference type="PeptideAtlas" id="Q9XWF4"/>
<dbReference type="EnsemblMetazoa" id="Y52B11A.2a.1">
    <molecule id="Q9XWF4-1"/>
    <property type="protein sequence ID" value="Y52B11A.2a.1"/>
    <property type="gene ID" value="WBGene00013122"/>
</dbReference>
<dbReference type="EnsemblMetazoa" id="Y52B11A.2b.1">
    <molecule id="Q9XWF4-2"/>
    <property type="protein sequence ID" value="Y52B11A.2b.1"/>
    <property type="gene ID" value="WBGene00013122"/>
</dbReference>
<dbReference type="GeneID" id="173001"/>
<dbReference type="KEGG" id="cel:CELE_Y52B11A.2"/>
<dbReference type="UCSC" id="Y52B11A.2a">
    <molecule id="Q9XWF4-1"/>
    <property type="organism name" value="c. elegans"/>
</dbReference>
<dbReference type="AGR" id="WB:WBGene00013122"/>
<dbReference type="CTD" id="173001"/>
<dbReference type="WormBase" id="Y52B11A.2a">
    <molecule id="Q9XWF4-1"/>
    <property type="protein sequence ID" value="CE20291"/>
    <property type="gene ID" value="WBGene00013122"/>
    <property type="gene designation" value="impt-1"/>
</dbReference>
<dbReference type="WormBase" id="Y52B11A.2b">
    <molecule id="Q9XWF4-2"/>
    <property type="protein sequence ID" value="CE36243"/>
    <property type="gene ID" value="WBGene00013122"/>
    <property type="gene designation" value="impt-1"/>
</dbReference>
<dbReference type="eggNOG" id="KOG3299">
    <property type="taxonomic scope" value="Eukaryota"/>
</dbReference>
<dbReference type="GeneTree" id="ENSGT00390000017571"/>
<dbReference type="HOGENOM" id="CLU_045276_1_0_1"/>
<dbReference type="InParanoid" id="Q9XWF4"/>
<dbReference type="OMA" id="FRHICNL"/>
<dbReference type="OrthoDB" id="69641at2759"/>
<dbReference type="PhylomeDB" id="Q9XWF4"/>
<dbReference type="PRO" id="PR:Q9XWF4"/>
<dbReference type="Proteomes" id="UP000001940">
    <property type="component" value="Chromosome I"/>
</dbReference>
<dbReference type="Bgee" id="WBGene00013122">
    <property type="expression patterns" value="Expressed in germ line (C elegans) and 4 other cell types or tissues"/>
</dbReference>
<dbReference type="GO" id="GO:0005737">
    <property type="term" value="C:cytoplasm"/>
    <property type="evidence" value="ECO:0000318"/>
    <property type="project" value="GO_Central"/>
</dbReference>
<dbReference type="GO" id="GO:0140311">
    <property type="term" value="F:protein sequestering activity"/>
    <property type="evidence" value="ECO:0000250"/>
    <property type="project" value="UniProtKB"/>
</dbReference>
<dbReference type="GO" id="GO:0030154">
    <property type="term" value="P:cell differentiation"/>
    <property type="evidence" value="ECO:0007669"/>
    <property type="project" value="UniProtKB-KW"/>
</dbReference>
<dbReference type="GO" id="GO:0034198">
    <property type="term" value="P:cellular response to amino acid starvation"/>
    <property type="evidence" value="ECO:0000250"/>
    <property type="project" value="UniProtKB"/>
</dbReference>
<dbReference type="GO" id="GO:0140469">
    <property type="term" value="P:GCN2-mediated signaling"/>
    <property type="evidence" value="ECO:0000318"/>
    <property type="project" value="GO_Central"/>
</dbReference>
<dbReference type="GO" id="GO:0007399">
    <property type="term" value="P:nervous system development"/>
    <property type="evidence" value="ECO:0007669"/>
    <property type="project" value="UniProtKB-KW"/>
</dbReference>
<dbReference type="GO" id="GO:1990611">
    <property type="term" value="P:regulation of cytoplasmic translational initiation in response to stress"/>
    <property type="evidence" value="ECO:0000250"/>
    <property type="project" value="UniProtKB"/>
</dbReference>
<dbReference type="GO" id="GO:0006446">
    <property type="term" value="P:regulation of translational initiation"/>
    <property type="evidence" value="ECO:0000318"/>
    <property type="project" value="GO_Central"/>
</dbReference>
<dbReference type="CDD" id="cd23821">
    <property type="entry name" value="RWD_IMPACT"/>
    <property type="match status" value="1"/>
</dbReference>
<dbReference type="Gene3D" id="3.30.230.30">
    <property type="entry name" value="Impact, N-terminal domain"/>
    <property type="match status" value="1"/>
</dbReference>
<dbReference type="Gene3D" id="3.10.110.10">
    <property type="entry name" value="Ubiquitin Conjugating Enzyme"/>
    <property type="match status" value="1"/>
</dbReference>
<dbReference type="InterPro" id="IPR023582">
    <property type="entry name" value="Impact"/>
</dbReference>
<dbReference type="InterPro" id="IPR001498">
    <property type="entry name" value="Impact_N"/>
</dbReference>
<dbReference type="InterPro" id="IPR036956">
    <property type="entry name" value="Impact_N_sf"/>
</dbReference>
<dbReference type="InterPro" id="IPR020568">
    <property type="entry name" value="Ribosomal_Su5_D2-typ_SF"/>
</dbReference>
<dbReference type="InterPro" id="IPR006575">
    <property type="entry name" value="RWD_dom"/>
</dbReference>
<dbReference type="InterPro" id="IPR016135">
    <property type="entry name" value="UBQ-conjugating_enzyme/RWD"/>
</dbReference>
<dbReference type="PANTHER" id="PTHR16301">
    <property type="entry name" value="IMPACT-RELATED"/>
    <property type="match status" value="1"/>
</dbReference>
<dbReference type="PANTHER" id="PTHR16301:SF25">
    <property type="entry name" value="PROTEIN IMPACT"/>
    <property type="match status" value="1"/>
</dbReference>
<dbReference type="Pfam" id="PF05773">
    <property type="entry name" value="RWD"/>
    <property type="match status" value="1"/>
</dbReference>
<dbReference type="Pfam" id="PF01205">
    <property type="entry name" value="UPF0029"/>
    <property type="match status" value="1"/>
</dbReference>
<dbReference type="SMART" id="SM00591">
    <property type="entry name" value="RWD"/>
    <property type="match status" value="1"/>
</dbReference>
<dbReference type="SUPFAM" id="SSF54211">
    <property type="entry name" value="Ribosomal protein S5 domain 2-like"/>
    <property type="match status" value="1"/>
</dbReference>
<dbReference type="SUPFAM" id="SSF54495">
    <property type="entry name" value="UBC-like"/>
    <property type="match status" value="1"/>
</dbReference>
<dbReference type="PROSITE" id="PS50908">
    <property type="entry name" value="RWD"/>
    <property type="match status" value="1"/>
</dbReference>
<name>IMPCT_CAEEL</name>
<accession>Q9XWF4</accession>
<accession>Q7K779</accession>
<keyword id="KW-0025">Alternative splicing</keyword>
<keyword id="KW-0963">Cytoplasm</keyword>
<keyword id="KW-0221">Differentiation</keyword>
<keyword id="KW-0524">Neurogenesis</keyword>
<keyword id="KW-1185">Reference proteome</keyword>
<keyword id="KW-0678">Repressor</keyword>
<keyword id="KW-0346">Stress response</keyword>
<keyword id="KW-0810">Translation regulation</keyword>
<protein>
    <recommendedName>
        <fullName>Protein IMPACT homolog</fullName>
    </recommendedName>
</protein>
<proteinExistence type="inferred from homology"/>
<organism>
    <name type="scientific">Caenorhabditis elegans</name>
    <dbReference type="NCBI Taxonomy" id="6239"/>
    <lineage>
        <taxon>Eukaryota</taxon>
        <taxon>Metazoa</taxon>
        <taxon>Ecdysozoa</taxon>
        <taxon>Nematoda</taxon>
        <taxon>Chromadorea</taxon>
        <taxon>Rhabditida</taxon>
        <taxon>Rhabditina</taxon>
        <taxon>Rhabditomorpha</taxon>
        <taxon>Rhabditoidea</taxon>
        <taxon>Rhabditidae</taxon>
        <taxon>Peloderinae</taxon>
        <taxon>Caenorhabditis</taxon>
    </lineage>
</organism>
<feature type="chain" id="PRO_0000330858" description="Protein IMPACT homolog">
    <location>
        <begin position="1"/>
        <end position="257"/>
    </location>
</feature>
<feature type="domain" description="RWD" evidence="2">
    <location>
        <begin position="9"/>
        <end position="102"/>
    </location>
</feature>
<feature type="splice variant" id="VSP_033137" description="In isoform b." evidence="3">
    <original>D</original>
    <variation>F</variation>
    <location>
        <position position="101"/>
    </location>
</feature>
<feature type="splice variant" id="VSP_033138" description="In isoform b." evidence="3">
    <location>
        <begin position="102"/>
        <end position="257"/>
    </location>
</feature>
<comment type="function">
    <text evidence="1">Translational regulator that ensures constant high levels of translation under amino acid starvation. Plays a role as a negative regulator of the gcn-2 kinase activity; impairs gcn-1-mediated gcn-2 activation, and hence gcn-2-mediated eIF-2-alpha phosphorylation and subsequent down-regulation of protein synthesis in amino acid-starved cells. Plays a role in differentiation of neuronal cells by stimulating neurite outgrowth.</text>
</comment>
<comment type="subunit">
    <text evidence="1">Interacts with gcn-1; prevents the interaction of gcn-1 with gcn-2 and inhibits gcn-2 kinase activity. Interaction with rpl-39; this interaction occurs in a gcn-1-independent manner. Associates with ribosomes; this interaction occurs in a gcn-1-independent manner. Associates with actin; this interaction occurs in a gcn-1-independent manner.</text>
</comment>
<comment type="subcellular location">
    <subcellularLocation>
        <location evidence="1">Cytoplasm</location>
    </subcellularLocation>
</comment>
<comment type="alternative products">
    <event type="alternative splicing"/>
    <isoform>
        <id>Q9XWF4-1</id>
        <name evidence="4">a</name>
        <sequence type="displayed"/>
    </isoform>
    <isoform>
        <id>Q9XWF4-2</id>
        <name evidence="4">b</name>
        <sequence type="described" ref="VSP_033137 VSP_033138"/>
    </isoform>
</comment>
<comment type="similarity">
    <text evidence="3">Belongs to the IMPACT family.</text>
</comment>
<evidence type="ECO:0000250" key="1">
    <source>
        <dbReference type="UniProtKB" id="O55091"/>
    </source>
</evidence>
<evidence type="ECO:0000255" key="2">
    <source>
        <dbReference type="PROSITE-ProRule" id="PRU00179"/>
    </source>
</evidence>
<evidence type="ECO:0000305" key="3"/>
<evidence type="ECO:0000312" key="4">
    <source>
        <dbReference type="WormBase" id="Y52B11A.2a"/>
    </source>
</evidence>
<sequence>MSDEEQRIAEIESLASIFPDLLEETTDKQLVFKFDRDIGMTINLPEDYPSISPPIFELSGPYLRREQKEVLHNSLNDVYIENIGFPVIFNWISLVQDFIRDLPEEVAEPSHVADDVVTPMAEEIDDMNIRHGEVLTDRKSAFQAHLAEVRSKEDVDRVMRILKSNTKICRATHNITAYRYMTEINGKPIHHHDCVDDGEFGASSKMLELMDRMKADNVMVVVSRWYGGIHLGPDRFRHINNLTRQILSDNNYGPKKS</sequence>
<reference key="1">
    <citation type="journal article" date="1998" name="Science">
        <title>Genome sequence of the nematode C. elegans: a platform for investigating biology.</title>
        <authorList>
            <consortium name="The C. elegans sequencing consortium"/>
        </authorList>
    </citation>
    <scope>NUCLEOTIDE SEQUENCE [LARGE SCALE GENOMIC DNA]</scope>
    <scope>ALTERNATIVE SPLICING</scope>
    <source>
        <strain>Bristol N2</strain>
    </source>
</reference>